<protein>
    <recommendedName>
        <fullName evidence="1">Ribosomal RNA small subunit methyltransferase H</fullName>
        <ecNumber evidence="1">2.1.1.199</ecNumber>
    </recommendedName>
    <alternativeName>
        <fullName evidence="1">16S rRNA m(4)C1402 methyltransferase</fullName>
    </alternativeName>
    <alternativeName>
        <fullName evidence="1">rRNA (cytosine-N(4)-)-methyltransferase RsmH</fullName>
    </alternativeName>
</protein>
<feature type="chain" id="PRO_0000387019" description="Ribosomal RNA small subunit methyltransferase H">
    <location>
        <begin position="1"/>
        <end position="316"/>
    </location>
</feature>
<feature type="binding site" evidence="1">
    <location>
        <begin position="32"/>
        <end position="34"/>
    </location>
    <ligand>
        <name>S-adenosyl-L-methionine</name>
        <dbReference type="ChEBI" id="CHEBI:59789"/>
    </ligand>
</feature>
<feature type="binding site" evidence="1">
    <location>
        <position position="52"/>
    </location>
    <ligand>
        <name>S-adenosyl-L-methionine</name>
        <dbReference type="ChEBI" id="CHEBI:59789"/>
    </ligand>
</feature>
<feature type="binding site" evidence="1">
    <location>
        <position position="79"/>
    </location>
    <ligand>
        <name>S-adenosyl-L-methionine</name>
        <dbReference type="ChEBI" id="CHEBI:59789"/>
    </ligand>
</feature>
<feature type="binding site" evidence="1">
    <location>
        <position position="106"/>
    </location>
    <ligand>
        <name>S-adenosyl-L-methionine</name>
        <dbReference type="ChEBI" id="CHEBI:59789"/>
    </ligand>
</feature>
<feature type="binding site" evidence="1">
    <location>
        <position position="113"/>
    </location>
    <ligand>
        <name>S-adenosyl-L-methionine</name>
        <dbReference type="ChEBI" id="CHEBI:59789"/>
    </ligand>
</feature>
<reference key="1">
    <citation type="journal article" date="2012" name="Stand. Genomic Sci.">
        <title>Complete genome sequence of Paenibacillus sp. strain JDR-2.</title>
        <authorList>
            <person name="Chow V."/>
            <person name="Nong G."/>
            <person name="St John F.J."/>
            <person name="Rice J.D."/>
            <person name="Dickstein E."/>
            <person name="Chertkov O."/>
            <person name="Bruce D."/>
            <person name="Detter C."/>
            <person name="Brettin T."/>
            <person name="Han J."/>
            <person name="Woyke T."/>
            <person name="Pitluck S."/>
            <person name="Nolan M."/>
            <person name="Pati A."/>
            <person name="Martin J."/>
            <person name="Copeland A."/>
            <person name="Land M.L."/>
            <person name="Goodwin L."/>
            <person name="Jones J.B."/>
            <person name="Ingram L.O."/>
            <person name="Shanmugam K.T."/>
            <person name="Preston J.F."/>
        </authorList>
    </citation>
    <scope>NUCLEOTIDE SEQUENCE [LARGE SCALE GENOMIC DNA]</scope>
    <source>
        <strain>JDR-2</strain>
    </source>
</reference>
<sequence length="316" mass="34734">MFQHITVLLEEAVDGLAIKPGGIYVDCTLGGAGHSERIVSQLSGGGRLIAFDQDDAALDNARVRLAPYMDRVTLVKSNFRYLEEMLLTCDVPTVDGVPQVDGILFDLGVSSPQLDEAERGFSYNHDAPLDMRMDQGGALTAYDIVNSWEEREISRILHVYGEEKFARSIARKIVQARENAPIETTGELAELVKTGIPAAARRTGGHPAKRSFQALRIAVNDELGAEEDALEEAVKCIRPGGRISVITFHSLEDRICKQLFASYVEKCTCPPDFPKCVCGGTGKLRLVNRKPIVPTEQELEVNPRSRSAKLRVAEKL</sequence>
<proteinExistence type="inferred from homology"/>
<gene>
    <name evidence="1" type="primary">rsmH</name>
    <name type="synonym">mraW</name>
    <name type="ordered locus">Pjdr2_3898</name>
</gene>
<comment type="function">
    <text evidence="1">Specifically methylates the N4 position of cytidine in position 1402 (C1402) of 16S rRNA.</text>
</comment>
<comment type="catalytic activity">
    <reaction evidence="1">
        <text>cytidine(1402) in 16S rRNA + S-adenosyl-L-methionine = N(4)-methylcytidine(1402) in 16S rRNA + S-adenosyl-L-homocysteine + H(+)</text>
        <dbReference type="Rhea" id="RHEA:42928"/>
        <dbReference type="Rhea" id="RHEA-COMP:10286"/>
        <dbReference type="Rhea" id="RHEA-COMP:10287"/>
        <dbReference type="ChEBI" id="CHEBI:15378"/>
        <dbReference type="ChEBI" id="CHEBI:57856"/>
        <dbReference type="ChEBI" id="CHEBI:59789"/>
        <dbReference type="ChEBI" id="CHEBI:74506"/>
        <dbReference type="ChEBI" id="CHEBI:82748"/>
        <dbReference type="EC" id="2.1.1.199"/>
    </reaction>
</comment>
<comment type="subcellular location">
    <subcellularLocation>
        <location evidence="1">Cytoplasm</location>
    </subcellularLocation>
</comment>
<comment type="similarity">
    <text evidence="1">Belongs to the methyltransferase superfamily. RsmH family.</text>
</comment>
<evidence type="ECO:0000255" key="1">
    <source>
        <dbReference type="HAMAP-Rule" id="MF_01007"/>
    </source>
</evidence>
<organism>
    <name type="scientific">Paenibacillus sp. (strain JDR-2)</name>
    <dbReference type="NCBI Taxonomy" id="324057"/>
    <lineage>
        <taxon>Bacteria</taxon>
        <taxon>Bacillati</taxon>
        <taxon>Bacillota</taxon>
        <taxon>Bacilli</taxon>
        <taxon>Bacillales</taxon>
        <taxon>Paenibacillaceae</taxon>
        <taxon>Paenibacillus</taxon>
    </lineage>
</organism>
<keyword id="KW-0963">Cytoplasm</keyword>
<keyword id="KW-0489">Methyltransferase</keyword>
<keyword id="KW-0698">rRNA processing</keyword>
<keyword id="KW-0949">S-adenosyl-L-methionine</keyword>
<keyword id="KW-0808">Transferase</keyword>
<dbReference type="EC" id="2.1.1.199" evidence="1"/>
<dbReference type="EMBL" id="CP001656">
    <property type="protein sequence ID" value="ACT02528.1"/>
    <property type="molecule type" value="Genomic_DNA"/>
</dbReference>
<dbReference type="RefSeq" id="WP_015845468.1">
    <property type="nucleotide sequence ID" value="NC_012914.1"/>
</dbReference>
<dbReference type="SMR" id="C6D563"/>
<dbReference type="STRING" id="324057.Pjdr2_3898"/>
<dbReference type="KEGG" id="pjd:Pjdr2_3898"/>
<dbReference type="eggNOG" id="COG0275">
    <property type="taxonomic scope" value="Bacteria"/>
</dbReference>
<dbReference type="HOGENOM" id="CLU_038422_2_0_9"/>
<dbReference type="OrthoDB" id="9806637at2"/>
<dbReference type="GO" id="GO:0005737">
    <property type="term" value="C:cytoplasm"/>
    <property type="evidence" value="ECO:0007669"/>
    <property type="project" value="UniProtKB-SubCell"/>
</dbReference>
<dbReference type="GO" id="GO:0071424">
    <property type="term" value="F:rRNA (cytosine-N4-)-methyltransferase activity"/>
    <property type="evidence" value="ECO:0007669"/>
    <property type="project" value="UniProtKB-UniRule"/>
</dbReference>
<dbReference type="GO" id="GO:0070475">
    <property type="term" value="P:rRNA base methylation"/>
    <property type="evidence" value="ECO:0007669"/>
    <property type="project" value="UniProtKB-UniRule"/>
</dbReference>
<dbReference type="FunFam" id="1.10.150.170:FF:000001">
    <property type="entry name" value="Ribosomal RNA small subunit methyltransferase H"/>
    <property type="match status" value="1"/>
</dbReference>
<dbReference type="Gene3D" id="1.10.150.170">
    <property type="entry name" value="Putative methyltransferase TM0872, insert domain"/>
    <property type="match status" value="1"/>
</dbReference>
<dbReference type="Gene3D" id="3.40.50.150">
    <property type="entry name" value="Vaccinia Virus protein VP39"/>
    <property type="match status" value="1"/>
</dbReference>
<dbReference type="HAMAP" id="MF_01007">
    <property type="entry name" value="16SrRNA_methyltr_H"/>
    <property type="match status" value="1"/>
</dbReference>
<dbReference type="InterPro" id="IPR002903">
    <property type="entry name" value="RsmH"/>
</dbReference>
<dbReference type="InterPro" id="IPR023397">
    <property type="entry name" value="SAM-dep_MeTrfase_MraW_recog"/>
</dbReference>
<dbReference type="InterPro" id="IPR029063">
    <property type="entry name" value="SAM-dependent_MTases_sf"/>
</dbReference>
<dbReference type="NCBIfam" id="TIGR00006">
    <property type="entry name" value="16S rRNA (cytosine(1402)-N(4))-methyltransferase RsmH"/>
    <property type="match status" value="1"/>
</dbReference>
<dbReference type="PANTHER" id="PTHR11265:SF0">
    <property type="entry name" value="12S RRNA N4-METHYLCYTIDINE METHYLTRANSFERASE"/>
    <property type="match status" value="1"/>
</dbReference>
<dbReference type="PANTHER" id="PTHR11265">
    <property type="entry name" value="S-ADENOSYL-METHYLTRANSFERASE MRAW"/>
    <property type="match status" value="1"/>
</dbReference>
<dbReference type="Pfam" id="PF01795">
    <property type="entry name" value="Methyltransf_5"/>
    <property type="match status" value="1"/>
</dbReference>
<dbReference type="PIRSF" id="PIRSF004486">
    <property type="entry name" value="MraW"/>
    <property type="match status" value="1"/>
</dbReference>
<dbReference type="SUPFAM" id="SSF81799">
    <property type="entry name" value="Putative methyltransferase TM0872, insert domain"/>
    <property type="match status" value="1"/>
</dbReference>
<dbReference type="SUPFAM" id="SSF53335">
    <property type="entry name" value="S-adenosyl-L-methionine-dependent methyltransferases"/>
    <property type="match status" value="1"/>
</dbReference>
<name>RSMH_PAESJ</name>
<accession>C6D563</accession>